<organism>
    <name type="scientific">Cereibacter sphaeroides (strain ATCC 17025 / ATH 2.4.3)</name>
    <name type="common">Rhodobacter sphaeroides</name>
    <dbReference type="NCBI Taxonomy" id="349102"/>
    <lineage>
        <taxon>Bacteria</taxon>
        <taxon>Pseudomonadati</taxon>
        <taxon>Pseudomonadota</taxon>
        <taxon>Alphaproteobacteria</taxon>
        <taxon>Rhodobacterales</taxon>
        <taxon>Paracoccaceae</taxon>
        <taxon>Cereibacter</taxon>
    </lineage>
</organism>
<protein>
    <recommendedName>
        <fullName evidence="1">Large ribosomal subunit protein uL6</fullName>
    </recommendedName>
    <alternativeName>
        <fullName evidence="2">50S ribosomal protein L6</fullName>
    </alternativeName>
</protein>
<keyword id="KW-0687">Ribonucleoprotein</keyword>
<keyword id="KW-0689">Ribosomal protein</keyword>
<keyword id="KW-0694">RNA-binding</keyword>
<keyword id="KW-0699">rRNA-binding</keyword>
<evidence type="ECO:0000255" key="1">
    <source>
        <dbReference type="HAMAP-Rule" id="MF_01365"/>
    </source>
</evidence>
<evidence type="ECO:0000305" key="2"/>
<dbReference type="EMBL" id="CP000661">
    <property type="protein sequence ID" value="ABP71407.1"/>
    <property type="molecule type" value="Genomic_DNA"/>
</dbReference>
<dbReference type="SMR" id="A4WVJ3"/>
<dbReference type="STRING" id="349102.Rsph17025_2519"/>
<dbReference type="KEGG" id="rsq:Rsph17025_2519"/>
<dbReference type="eggNOG" id="COG0097">
    <property type="taxonomic scope" value="Bacteria"/>
</dbReference>
<dbReference type="HOGENOM" id="CLU_065464_1_2_5"/>
<dbReference type="BioCyc" id="RSPH349102:G1G8M-2597-MONOMER"/>
<dbReference type="GO" id="GO:0022625">
    <property type="term" value="C:cytosolic large ribosomal subunit"/>
    <property type="evidence" value="ECO:0007669"/>
    <property type="project" value="TreeGrafter"/>
</dbReference>
<dbReference type="GO" id="GO:0019843">
    <property type="term" value="F:rRNA binding"/>
    <property type="evidence" value="ECO:0007669"/>
    <property type="project" value="UniProtKB-UniRule"/>
</dbReference>
<dbReference type="GO" id="GO:0003735">
    <property type="term" value="F:structural constituent of ribosome"/>
    <property type="evidence" value="ECO:0007669"/>
    <property type="project" value="InterPro"/>
</dbReference>
<dbReference type="GO" id="GO:0002181">
    <property type="term" value="P:cytoplasmic translation"/>
    <property type="evidence" value="ECO:0007669"/>
    <property type="project" value="TreeGrafter"/>
</dbReference>
<dbReference type="FunFam" id="3.90.930.12:FF:000001">
    <property type="entry name" value="50S ribosomal protein L6"/>
    <property type="match status" value="1"/>
</dbReference>
<dbReference type="Gene3D" id="3.90.930.12">
    <property type="entry name" value="Ribosomal protein L6, alpha-beta domain"/>
    <property type="match status" value="2"/>
</dbReference>
<dbReference type="HAMAP" id="MF_01365_B">
    <property type="entry name" value="Ribosomal_uL6_B"/>
    <property type="match status" value="1"/>
</dbReference>
<dbReference type="InterPro" id="IPR000702">
    <property type="entry name" value="Ribosomal_uL6-like"/>
</dbReference>
<dbReference type="InterPro" id="IPR036789">
    <property type="entry name" value="Ribosomal_uL6-like_a/b-dom_sf"/>
</dbReference>
<dbReference type="InterPro" id="IPR020040">
    <property type="entry name" value="Ribosomal_uL6_a/b-dom"/>
</dbReference>
<dbReference type="InterPro" id="IPR019906">
    <property type="entry name" value="Ribosomal_uL6_bac-type"/>
</dbReference>
<dbReference type="InterPro" id="IPR002358">
    <property type="entry name" value="Ribosomal_uL6_CS"/>
</dbReference>
<dbReference type="NCBIfam" id="TIGR03654">
    <property type="entry name" value="L6_bact"/>
    <property type="match status" value="1"/>
</dbReference>
<dbReference type="PANTHER" id="PTHR11655">
    <property type="entry name" value="60S/50S RIBOSOMAL PROTEIN L6/L9"/>
    <property type="match status" value="1"/>
</dbReference>
<dbReference type="PANTHER" id="PTHR11655:SF14">
    <property type="entry name" value="LARGE RIBOSOMAL SUBUNIT PROTEIN UL6M"/>
    <property type="match status" value="1"/>
</dbReference>
<dbReference type="Pfam" id="PF00347">
    <property type="entry name" value="Ribosomal_L6"/>
    <property type="match status" value="2"/>
</dbReference>
<dbReference type="PIRSF" id="PIRSF002162">
    <property type="entry name" value="Ribosomal_L6"/>
    <property type="match status" value="1"/>
</dbReference>
<dbReference type="PRINTS" id="PR00059">
    <property type="entry name" value="RIBOSOMALL6"/>
</dbReference>
<dbReference type="SUPFAM" id="SSF56053">
    <property type="entry name" value="Ribosomal protein L6"/>
    <property type="match status" value="2"/>
</dbReference>
<dbReference type="PROSITE" id="PS00525">
    <property type="entry name" value="RIBOSOMAL_L6_1"/>
    <property type="match status" value="1"/>
</dbReference>
<proteinExistence type="inferred from homology"/>
<comment type="function">
    <text evidence="1">This protein binds to the 23S rRNA, and is important in its secondary structure. It is located near the subunit interface in the base of the L7/L12 stalk, and near the tRNA binding site of the peptidyltransferase center.</text>
</comment>
<comment type="subunit">
    <text evidence="1">Part of the 50S ribosomal subunit.</text>
</comment>
<comment type="similarity">
    <text evidence="1">Belongs to the universal ribosomal protein uL6 family.</text>
</comment>
<reference key="1">
    <citation type="submission" date="2007-04" db="EMBL/GenBank/DDBJ databases">
        <title>Complete sequence of chromosome of Rhodobacter sphaeroides ATCC 17025.</title>
        <authorList>
            <consortium name="US DOE Joint Genome Institute"/>
            <person name="Copeland A."/>
            <person name="Lucas S."/>
            <person name="Lapidus A."/>
            <person name="Barry K."/>
            <person name="Detter J.C."/>
            <person name="Glavina del Rio T."/>
            <person name="Hammon N."/>
            <person name="Israni S."/>
            <person name="Dalin E."/>
            <person name="Tice H."/>
            <person name="Pitluck S."/>
            <person name="Chertkov O."/>
            <person name="Brettin T."/>
            <person name="Bruce D."/>
            <person name="Han C."/>
            <person name="Schmutz J."/>
            <person name="Larimer F."/>
            <person name="Land M."/>
            <person name="Hauser L."/>
            <person name="Kyrpides N."/>
            <person name="Kim E."/>
            <person name="Richardson P."/>
            <person name="Mackenzie C."/>
            <person name="Choudhary M."/>
            <person name="Donohue T.J."/>
            <person name="Kaplan S."/>
        </authorList>
    </citation>
    <scope>NUCLEOTIDE SEQUENCE [LARGE SCALE GENOMIC DNA]</scope>
    <source>
        <strain>ATCC 17025 / ATH 2.4.3</strain>
    </source>
</reference>
<accession>A4WVJ3</accession>
<name>RL6_CERS5</name>
<feature type="chain" id="PRO_1000055295" description="Large ribosomal subunit protein uL6">
    <location>
        <begin position="1"/>
        <end position="177"/>
    </location>
</feature>
<sequence length="177" mass="19402">MSRIGKKPVPLPKGVTASISGQTVEVKGPKGTRTFSATDDVTIALEEGTVKVTPRGTSKRARQQWGMVRSQVENLVTGVTAGFKKELEITGVGYRAQMAGNVLKLSLGYSHDVNFEVPAGVTVTTPKQTEITVEGIDQQLVGQVAANIREWRRPEPYKGKGIRYKDEFIFRKEGKKK</sequence>
<gene>
    <name evidence="1" type="primary">rplF</name>
    <name type="ordered locus">Rsph17025_2519</name>
</gene>